<comment type="function">
    <text evidence="1">Produces ATP from ADP in the presence of a proton gradient across the membrane. The alpha chain is a regulatory subunit.</text>
</comment>
<comment type="catalytic activity">
    <reaction evidence="1">
        <text>ATP + H2O + 4 H(+)(in) = ADP + phosphate + 5 H(+)(out)</text>
        <dbReference type="Rhea" id="RHEA:57720"/>
        <dbReference type="ChEBI" id="CHEBI:15377"/>
        <dbReference type="ChEBI" id="CHEBI:15378"/>
        <dbReference type="ChEBI" id="CHEBI:30616"/>
        <dbReference type="ChEBI" id="CHEBI:43474"/>
        <dbReference type="ChEBI" id="CHEBI:456216"/>
        <dbReference type="EC" id="7.1.2.2"/>
    </reaction>
</comment>
<comment type="subunit">
    <text evidence="1">F-type ATPases have 2 components, CF(1) - the catalytic core - and CF(0) - the membrane proton channel. CF(1) has five subunits: alpha(3), beta(3), gamma(1), delta(1), epsilon(1). CF(0) has four main subunits: a, b, b' and c.</text>
</comment>
<comment type="subcellular location">
    <subcellularLocation>
        <location evidence="1">Plastid</location>
        <location evidence="1">Chloroplast thylakoid membrane</location>
        <topology evidence="1">Peripheral membrane protein</topology>
    </subcellularLocation>
</comment>
<comment type="similarity">
    <text evidence="1">Belongs to the ATPase alpha/beta chains family.</text>
</comment>
<dbReference type="EC" id="7.1.2.2" evidence="1"/>
<dbReference type="EMBL" id="AY958085">
    <property type="protein sequence ID" value="AAX45682.1"/>
    <property type="molecule type" value="Genomic_DNA"/>
</dbReference>
<dbReference type="RefSeq" id="YP_636448.1">
    <property type="nucleotide sequence ID" value="NC_008116.1"/>
</dbReference>
<dbReference type="SMR" id="Q32RS8"/>
<dbReference type="GeneID" id="4108573"/>
<dbReference type="GO" id="GO:0009535">
    <property type="term" value="C:chloroplast thylakoid membrane"/>
    <property type="evidence" value="ECO:0007669"/>
    <property type="project" value="UniProtKB-SubCell"/>
</dbReference>
<dbReference type="GO" id="GO:0045259">
    <property type="term" value="C:proton-transporting ATP synthase complex"/>
    <property type="evidence" value="ECO:0007669"/>
    <property type="project" value="UniProtKB-KW"/>
</dbReference>
<dbReference type="GO" id="GO:0043531">
    <property type="term" value="F:ADP binding"/>
    <property type="evidence" value="ECO:0007669"/>
    <property type="project" value="TreeGrafter"/>
</dbReference>
<dbReference type="GO" id="GO:0005524">
    <property type="term" value="F:ATP binding"/>
    <property type="evidence" value="ECO:0007669"/>
    <property type="project" value="UniProtKB-UniRule"/>
</dbReference>
<dbReference type="GO" id="GO:0046933">
    <property type="term" value="F:proton-transporting ATP synthase activity, rotational mechanism"/>
    <property type="evidence" value="ECO:0007669"/>
    <property type="project" value="UniProtKB-UniRule"/>
</dbReference>
<dbReference type="CDD" id="cd18113">
    <property type="entry name" value="ATP-synt_F1_alpha_C"/>
    <property type="match status" value="1"/>
</dbReference>
<dbReference type="CDD" id="cd18116">
    <property type="entry name" value="ATP-synt_F1_alpha_N"/>
    <property type="match status" value="1"/>
</dbReference>
<dbReference type="CDD" id="cd01132">
    <property type="entry name" value="F1-ATPase_alpha_CD"/>
    <property type="match status" value="1"/>
</dbReference>
<dbReference type="FunFam" id="1.20.150.20:FF:000001">
    <property type="entry name" value="ATP synthase subunit alpha"/>
    <property type="match status" value="1"/>
</dbReference>
<dbReference type="FunFam" id="2.40.30.20:FF:000001">
    <property type="entry name" value="ATP synthase subunit alpha"/>
    <property type="match status" value="1"/>
</dbReference>
<dbReference type="FunFam" id="3.40.50.300:FF:000002">
    <property type="entry name" value="ATP synthase subunit alpha"/>
    <property type="match status" value="1"/>
</dbReference>
<dbReference type="Gene3D" id="2.40.30.20">
    <property type="match status" value="1"/>
</dbReference>
<dbReference type="Gene3D" id="1.20.150.20">
    <property type="entry name" value="ATP synthase alpha/beta chain, C-terminal domain"/>
    <property type="match status" value="1"/>
</dbReference>
<dbReference type="Gene3D" id="3.40.50.300">
    <property type="entry name" value="P-loop containing nucleotide triphosphate hydrolases"/>
    <property type="match status" value="1"/>
</dbReference>
<dbReference type="HAMAP" id="MF_01346">
    <property type="entry name" value="ATP_synth_alpha_bact"/>
    <property type="match status" value="1"/>
</dbReference>
<dbReference type="InterPro" id="IPR023366">
    <property type="entry name" value="ATP_synth_asu-like_sf"/>
</dbReference>
<dbReference type="InterPro" id="IPR000793">
    <property type="entry name" value="ATP_synth_asu_C"/>
</dbReference>
<dbReference type="InterPro" id="IPR038376">
    <property type="entry name" value="ATP_synth_asu_C_sf"/>
</dbReference>
<dbReference type="InterPro" id="IPR033732">
    <property type="entry name" value="ATP_synth_F1_a_nt-bd_dom"/>
</dbReference>
<dbReference type="InterPro" id="IPR005294">
    <property type="entry name" value="ATP_synth_F1_asu"/>
</dbReference>
<dbReference type="InterPro" id="IPR020003">
    <property type="entry name" value="ATPase_a/bsu_AS"/>
</dbReference>
<dbReference type="InterPro" id="IPR004100">
    <property type="entry name" value="ATPase_F1/V1/A1_a/bsu_N"/>
</dbReference>
<dbReference type="InterPro" id="IPR036121">
    <property type="entry name" value="ATPase_F1/V1/A1_a/bsu_N_sf"/>
</dbReference>
<dbReference type="InterPro" id="IPR000194">
    <property type="entry name" value="ATPase_F1/V1/A1_a/bsu_nucl-bd"/>
</dbReference>
<dbReference type="InterPro" id="IPR027417">
    <property type="entry name" value="P-loop_NTPase"/>
</dbReference>
<dbReference type="NCBIfam" id="TIGR00962">
    <property type="entry name" value="atpA"/>
    <property type="match status" value="1"/>
</dbReference>
<dbReference type="NCBIfam" id="NF009884">
    <property type="entry name" value="PRK13343.1"/>
    <property type="match status" value="1"/>
</dbReference>
<dbReference type="PANTHER" id="PTHR48082">
    <property type="entry name" value="ATP SYNTHASE SUBUNIT ALPHA, MITOCHONDRIAL"/>
    <property type="match status" value="1"/>
</dbReference>
<dbReference type="PANTHER" id="PTHR48082:SF2">
    <property type="entry name" value="ATP SYNTHASE SUBUNIT ALPHA, MITOCHONDRIAL"/>
    <property type="match status" value="1"/>
</dbReference>
<dbReference type="Pfam" id="PF00006">
    <property type="entry name" value="ATP-synt_ab"/>
    <property type="match status" value="1"/>
</dbReference>
<dbReference type="Pfam" id="PF00306">
    <property type="entry name" value="ATP-synt_ab_C"/>
    <property type="match status" value="1"/>
</dbReference>
<dbReference type="Pfam" id="PF02874">
    <property type="entry name" value="ATP-synt_ab_N"/>
    <property type="match status" value="1"/>
</dbReference>
<dbReference type="PIRSF" id="PIRSF039088">
    <property type="entry name" value="F_ATPase_subunit_alpha"/>
    <property type="match status" value="1"/>
</dbReference>
<dbReference type="SUPFAM" id="SSF47917">
    <property type="entry name" value="C-terminal domain of alpha and beta subunits of F1 ATP synthase"/>
    <property type="match status" value="1"/>
</dbReference>
<dbReference type="SUPFAM" id="SSF50615">
    <property type="entry name" value="N-terminal domain of alpha and beta subunits of F1 ATP synthase"/>
    <property type="match status" value="1"/>
</dbReference>
<dbReference type="SUPFAM" id="SSF52540">
    <property type="entry name" value="P-loop containing nucleoside triphosphate hydrolases"/>
    <property type="match status" value="1"/>
</dbReference>
<dbReference type="PROSITE" id="PS00152">
    <property type="entry name" value="ATPASE_ALPHA_BETA"/>
    <property type="match status" value="1"/>
</dbReference>
<geneLocation type="chloroplast"/>
<sequence>MVNIRPDEISSIIRKQIEQYNQEVKVVNIGTVLQVGDGIARIYGLDKVMAGELLEFEDGTVGIALNLESDNVGAVLMGDGLNIQEGSSVKATGKIAQIPVSDGYLGRVVNALGRPIDGKGDIPASEYRLIESPAPGIISRRSVYEPMQTGLIAIDAMIPIGRGQRELIIGDRQTGKTAVATDTILNQKGQNVICVYVAIGQKASSIAQVLNTFEERGAMDYTIIVAETADAPATLQYLAPYTGAAIAEYFMYRGKHTLVIYDDLSKQAQAYRQMSLLLRRPPGREAYPGDVFYLHSRLLERAAKLSSQLGEGSMTALPIVETQAGDVSAYIPTNVISITDGQIFLSADLFNAGIRPAINVGISVSRVGSAAQIKAMKQVAGKLKLELAQFAELEAFSQFASDLDKATQNQLARGQRLRELLKQSQAAPLAVEEQVATIYTGVNGYLDVIEVAQVRRFLTELRQYLGTNKPKFGEIIREKKAVTEEAESLLKAAIKEHTEAFLLQEESVGSRS</sequence>
<organism>
    <name type="scientific">Staurastrum punctulatum</name>
    <name type="common">Green alga</name>
    <name type="synonym">Cosmoastrum punctulatum</name>
    <dbReference type="NCBI Taxonomy" id="102822"/>
    <lineage>
        <taxon>Eukaryota</taxon>
        <taxon>Viridiplantae</taxon>
        <taxon>Streptophyta</taxon>
        <taxon>Zygnematophyceae</taxon>
        <taxon>Zygnematophycidae</taxon>
        <taxon>Desmidiales</taxon>
        <taxon>Desmidiaceae</taxon>
        <taxon>Staurastrum</taxon>
    </lineage>
</organism>
<name>ATPA_STAPU</name>
<gene>
    <name evidence="1" type="primary">atpA</name>
</gene>
<keyword id="KW-0066">ATP synthesis</keyword>
<keyword id="KW-0067">ATP-binding</keyword>
<keyword id="KW-0139">CF(1)</keyword>
<keyword id="KW-0150">Chloroplast</keyword>
<keyword id="KW-0375">Hydrogen ion transport</keyword>
<keyword id="KW-0406">Ion transport</keyword>
<keyword id="KW-0472">Membrane</keyword>
<keyword id="KW-0547">Nucleotide-binding</keyword>
<keyword id="KW-0934">Plastid</keyword>
<keyword id="KW-0793">Thylakoid</keyword>
<keyword id="KW-1278">Translocase</keyword>
<keyword id="KW-0813">Transport</keyword>
<feature type="chain" id="PRO_0000238444" description="ATP synthase subunit alpha, chloroplastic">
    <location>
        <begin position="1"/>
        <end position="512"/>
    </location>
</feature>
<feature type="binding site" evidence="1">
    <location>
        <begin position="170"/>
        <end position="177"/>
    </location>
    <ligand>
        <name>ATP</name>
        <dbReference type="ChEBI" id="CHEBI:30616"/>
    </ligand>
</feature>
<feature type="site" description="Required for activity" evidence="1">
    <location>
        <position position="363"/>
    </location>
</feature>
<evidence type="ECO:0000255" key="1">
    <source>
        <dbReference type="HAMAP-Rule" id="MF_01346"/>
    </source>
</evidence>
<proteinExistence type="inferred from homology"/>
<reference key="1">
    <citation type="journal article" date="2005" name="BMC Biol.">
        <title>The complete chloroplast DNA sequences of the charophycean green algae Staurastrum and Zygnema reveal that the chloroplast genome underwent extensive changes during the evolution of the Zygnematales.</title>
        <authorList>
            <person name="Turmel M."/>
            <person name="Otis C."/>
            <person name="Lemieux C."/>
        </authorList>
    </citation>
    <scope>NUCLEOTIDE SEQUENCE [LARGE SCALE GENOMIC DNA]</scope>
</reference>
<protein>
    <recommendedName>
        <fullName evidence="1">ATP synthase subunit alpha, chloroplastic</fullName>
        <ecNumber evidence="1">7.1.2.2</ecNumber>
    </recommendedName>
    <alternativeName>
        <fullName evidence="1">ATP synthase F1 sector subunit alpha</fullName>
    </alternativeName>
    <alternativeName>
        <fullName evidence="1">F-ATPase subunit alpha</fullName>
    </alternativeName>
</protein>
<accession>Q32RS8</accession>